<keyword id="KW-1185">Reference proteome</keyword>
<sequence>MAEPGRPWAQARSAYRASEVLRRGTGRRRDPGPQSNGPGQEDARAPGRMARLRGQLRAEAASRSEVPRLLKLVERAGAGAAGRGREDRRAQPRAPCARYAGSPAAGPPTRRGSWRSASGGCRRAWRQCARSWAPGLRRCARSFERSWMPCARCCRRRRPRLPAASPAPSPAPRPAARPCRGRSAPLAPWSPPPGPQTTPRTAQQNAERTEPRPGRTTRRCQCRLGPRKVAGTEGGRTRAA</sequence>
<gene>
    <name evidence="3" type="primary">FAM246C</name>
</gene>
<reference key="1">
    <citation type="journal article" date="1999" name="Nature">
        <title>The DNA sequence of human chromosome 22.</title>
        <authorList>
            <person name="Dunham I."/>
            <person name="Hunt A.R."/>
            <person name="Collins J.E."/>
            <person name="Bruskiewich R."/>
            <person name="Beare D.M."/>
            <person name="Clamp M."/>
            <person name="Smink L.J."/>
            <person name="Ainscough R."/>
            <person name="Almeida J.P."/>
            <person name="Babbage A.K."/>
            <person name="Bagguley C."/>
            <person name="Bailey J."/>
            <person name="Barlow K.F."/>
            <person name="Bates K.N."/>
            <person name="Beasley O.P."/>
            <person name="Bird C.P."/>
            <person name="Blakey S.E."/>
            <person name="Bridgeman A.M."/>
            <person name="Buck D."/>
            <person name="Burgess J."/>
            <person name="Burrill W.D."/>
            <person name="Burton J."/>
            <person name="Carder C."/>
            <person name="Carter N.P."/>
            <person name="Chen Y."/>
            <person name="Clark G."/>
            <person name="Clegg S.M."/>
            <person name="Cobley V.E."/>
            <person name="Cole C.G."/>
            <person name="Collier R.E."/>
            <person name="Connor R."/>
            <person name="Conroy D."/>
            <person name="Corby N.R."/>
            <person name="Coville G.J."/>
            <person name="Cox A.V."/>
            <person name="Davis J."/>
            <person name="Dawson E."/>
            <person name="Dhami P.D."/>
            <person name="Dockree C."/>
            <person name="Dodsworth S.J."/>
            <person name="Durbin R.M."/>
            <person name="Ellington A.G."/>
            <person name="Evans K.L."/>
            <person name="Fey J.M."/>
            <person name="Fleming K."/>
            <person name="French L."/>
            <person name="Garner A.A."/>
            <person name="Gilbert J.G.R."/>
            <person name="Goward M.E."/>
            <person name="Grafham D.V."/>
            <person name="Griffiths M.N.D."/>
            <person name="Hall C."/>
            <person name="Hall R.E."/>
            <person name="Hall-Tamlyn G."/>
            <person name="Heathcott R.W."/>
            <person name="Ho S."/>
            <person name="Holmes S."/>
            <person name="Hunt S.E."/>
            <person name="Jones M.C."/>
            <person name="Kershaw J."/>
            <person name="Kimberley A.M."/>
            <person name="King A."/>
            <person name="Laird G.K."/>
            <person name="Langford C.F."/>
            <person name="Leversha M.A."/>
            <person name="Lloyd C."/>
            <person name="Lloyd D.M."/>
            <person name="Martyn I.D."/>
            <person name="Mashreghi-Mohammadi M."/>
            <person name="Matthews L.H."/>
            <person name="Mccann O.T."/>
            <person name="Mcclay J."/>
            <person name="Mclaren S."/>
            <person name="McMurray A.A."/>
            <person name="Milne S.A."/>
            <person name="Mortimore B.J."/>
            <person name="Odell C.N."/>
            <person name="Pavitt R."/>
            <person name="Pearce A.V."/>
            <person name="Pearson D."/>
            <person name="Phillimore B.J.C.T."/>
            <person name="Phillips S.H."/>
            <person name="Plumb R.W."/>
            <person name="Ramsay H."/>
            <person name="Ramsey Y."/>
            <person name="Rogers L."/>
            <person name="Ross M.T."/>
            <person name="Scott C.E."/>
            <person name="Sehra H.K."/>
            <person name="Skuce C.D."/>
            <person name="Smalley S."/>
            <person name="Smith M.L."/>
            <person name="Soderlund C."/>
            <person name="Spragon L."/>
            <person name="Steward C.A."/>
            <person name="Sulston J.E."/>
            <person name="Swann R.M."/>
            <person name="Vaudin M."/>
            <person name="Wall M."/>
            <person name="Wallis J.M."/>
            <person name="Whiteley M.N."/>
            <person name="Willey D.L."/>
            <person name="Williams L."/>
            <person name="Williams S.A."/>
            <person name="Williamson H."/>
            <person name="Wilmer T.E."/>
            <person name="Wilming L."/>
            <person name="Wright C.L."/>
            <person name="Hubbard T."/>
            <person name="Bentley D.R."/>
            <person name="Beck S."/>
            <person name="Rogers J."/>
            <person name="Shimizu N."/>
            <person name="Minoshima S."/>
            <person name="Kawasaki K."/>
            <person name="Sasaki T."/>
            <person name="Asakawa S."/>
            <person name="Kudoh J."/>
            <person name="Shintani A."/>
            <person name="Shibuya K."/>
            <person name="Yoshizaki Y."/>
            <person name="Aoki N."/>
            <person name="Mitsuyama S."/>
            <person name="Roe B.A."/>
            <person name="Chen F."/>
            <person name="Chu L."/>
            <person name="Crabtree J."/>
            <person name="Deschamps S."/>
            <person name="Do A."/>
            <person name="Do T."/>
            <person name="Dorman A."/>
            <person name="Fang F."/>
            <person name="Fu Y."/>
            <person name="Hu P."/>
            <person name="Hua A."/>
            <person name="Kenton S."/>
            <person name="Lai H."/>
            <person name="Lao H.I."/>
            <person name="Lewis J."/>
            <person name="Lewis S."/>
            <person name="Lin S.-P."/>
            <person name="Loh P."/>
            <person name="Malaj E."/>
            <person name="Nguyen T."/>
            <person name="Pan H."/>
            <person name="Phan S."/>
            <person name="Qi S."/>
            <person name="Qian Y."/>
            <person name="Ray L."/>
            <person name="Ren Q."/>
            <person name="Shaull S."/>
            <person name="Sloan D."/>
            <person name="Song L."/>
            <person name="Wang Q."/>
            <person name="Wang Y."/>
            <person name="Wang Z."/>
            <person name="White J."/>
            <person name="Willingham D."/>
            <person name="Wu H."/>
            <person name="Yao Z."/>
            <person name="Zhan M."/>
            <person name="Zhang G."/>
            <person name="Chissoe S."/>
            <person name="Murray J."/>
            <person name="Miller N."/>
            <person name="Minx P."/>
            <person name="Fulton R."/>
            <person name="Johnson D."/>
            <person name="Bemis G."/>
            <person name="Bentley D."/>
            <person name="Bradshaw H."/>
            <person name="Bourne S."/>
            <person name="Cordes M."/>
            <person name="Du Z."/>
            <person name="Fulton L."/>
            <person name="Goela D."/>
            <person name="Graves T."/>
            <person name="Hawkins J."/>
            <person name="Hinds K."/>
            <person name="Kemp K."/>
            <person name="Latreille P."/>
            <person name="Layman D."/>
            <person name="Ozersky P."/>
            <person name="Rohlfing T."/>
            <person name="Scheet P."/>
            <person name="Walker C."/>
            <person name="Wamsley A."/>
            <person name="Wohldmann P."/>
            <person name="Pepin K."/>
            <person name="Nelson J."/>
            <person name="Korf I."/>
            <person name="Bedell J.A."/>
            <person name="Hillier L.W."/>
            <person name="Mardis E."/>
            <person name="Waterston R."/>
            <person name="Wilson R."/>
            <person name="Emanuel B.S."/>
            <person name="Shaikh T."/>
            <person name="Kurahashi H."/>
            <person name="Saitta S."/>
            <person name="Budarf M.L."/>
            <person name="McDermid H.E."/>
            <person name="Johnson A."/>
            <person name="Wong A.C.C."/>
            <person name="Morrow B.E."/>
            <person name="Edelmann L."/>
            <person name="Kim U.J."/>
            <person name="Shizuya H."/>
            <person name="Simon M.I."/>
            <person name="Dumanski J.P."/>
            <person name="Peyrard M."/>
            <person name="Kedra D."/>
            <person name="Seroussi E."/>
            <person name="Fransson I."/>
            <person name="Tapia I."/>
            <person name="Bruder C.E."/>
            <person name="O'Brien K.P."/>
            <person name="Wilkinson P."/>
            <person name="Bodenteich A."/>
            <person name="Hartman K."/>
            <person name="Hu X."/>
            <person name="Khan A.S."/>
            <person name="Lane L."/>
            <person name="Tilahun Y."/>
            <person name="Wright H."/>
        </authorList>
    </citation>
    <scope>NUCLEOTIDE SEQUENCE [LARGE SCALE GENOMIC DNA]</scope>
</reference>
<accession>P0DSO1</accession>
<comment type="polymorphism">
    <text evidence="2">There are two variants, that are the most frequent in population and represented on the reference genome assembly (GRCh38/hg38). The first variant (rs979651598) has a stop codon instead of Ser-116, giving rise to truncated form. The variant Ser-116 is rare, except in populations from non-Finnish European. The second variant has a stop codon instead of Leu-186, giving rise to truncated form. The sequence shown is rare and is not represented on the reference genome assembly (GRCh38/hg38).</text>
</comment>
<comment type="similarity">
    <text evidence="2">Belongs to the FAM246 family.</text>
</comment>
<dbReference type="EMBL" id="AC000095">
    <property type="status" value="NOT_ANNOTATED_CDS"/>
    <property type="molecule type" value="Genomic_DNA"/>
</dbReference>
<dbReference type="SMR" id="P0DSO1"/>
<dbReference type="MassIVE" id="P0DSO1"/>
<dbReference type="PeptideAtlas" id="P0DSO1"/>
<dbReference type="AGR" id="HGNC:54842"/>
<dbReference type="GeneCards" id="FAM246C"/>
<dbReference type="HGNC" id="HGNC:54842">
    <property type="gene designation" value="FAM246C"/>
</dbReference>
<dbReference type="neXtProt" id="NX_P0DSO1"/>
<dbReference type="InParanoid" id="P0DSO1"/>
<dbReference type="OrthoDB" id="9540191at2759"/>
<dbReference type="PRO" id="PR:P0DSO1"/>
<dbReference type="Proteomes" id="UP000005640">
    <property type="component" value="Unplaced"/>
</dbReference>
<name>F246C_HUMAN</name>
<protein>
    <recommendedName>
        <fullName evidence="2">Protein FAM246C</fullName>
    </recommendedName>
</protein>
<evidence type="ECO:0000256" key="1">
    <source>
        <dbReference type="SAM" id="MobiDB-lite"/>
    </source>
</evidence>
<evidence type="ECO:0000305" key="2"/>
<evidence type="ECO:0000312" key="3">
    <source>
        <dbReference type="HGNC" id="HGNC:54842"/>
    </source>
</evidence>
<proteinExistence type="inferred from homology"/>
<organism>
    <name type="scientific">Homo sapiens</name>
    <name type="common">Human</name>
    <dbReference type="NCBI Taxonomy" id="9606"/>
    <lineage>
        <taxon>Eukaryota</taxon>
        <taxon>Metazoa</taxon>
        <taxon>Chordata</taxon>
        <taxon>Craniata</taxon>
        <taxon>Vertebrata</taxon>
        <taxon>Euteleostomi</taxon>
        <taxon>Mammalia</taxon>
        <taxon>Eutheria</taxon>
        <taxon>Euarchontoglires</taxon>
        <taxon>Primates</taxon>
        <taxon>Haplorrhini</taxon>
        <taxon>Catarrhini</taxon>
        <taxon>Hominidae</taxon>
        <taxon>Homo</taxon>
    </lineage>
</organism>
<feature type="chain" id="PRO_0000450448" description="Protein FAM246C">
    <location>
        <begin position="1"/>
        <end position="240"/>
    </location>
</feature>
<feature type="region of interest" description="Disordered" evidence="1">
    <location>
        <begin position="1"/>
        <end position="117"/>
    </location>
</feature>
<feature type="region of interest" description="Disordered" evidence="1">
    <location>
        <begin position="161"/>
        <end position="240"/>
    </location>
</feature>
<feature type="compositionally biased region" description="Basic and acidic residues" evidence="1">
    <location>
        <begin position="19"/>
        <end position="31"/>
    </location>
</feature>
<feature type="compositionally biased region" description="Basic and acidic residues" evidence="1">
    <location>
        <begin position="60"/>
        <end position="74"/>
    </location>
</feature>
<feature type="compositionally biased region" description="Pro residues" evidence="1">
    <location>
        <begin position="165"/>
        <end position="175"/>
    </location>
</feature>
<feature type="compositionally biased region" description="Low complexity" evidence="1">
    <location>
        <begin position="176"/>
        <end position="187"/>
    </location>
</feature>
<feature type="sequence variant" id="VAR_083575" description="In dbSNP:rs979651598." evidence="2">
    <location>
        <begin position="116"/>
        <end position="240"/>
    </location>
</feature>
<feature type="sequence variant" id="VAR_083576" description="In dbSNP:rs1310309275." evidence="2">
    <location>
        <begin position="186"/>
        <end position="240"/>
    </location>
</feature>